<organism>
    <name type="scientific">Bacillus cytotoxicus (strain DSM 22905 / CIP 110041 / 391-98 / NVH 391-98)</name>
    <dbReference type="NCBI Taxonomy" id="315749"/>
    <lineage>
        <taxon>Bacteria</taxon>
        <taxon>Bacillati</taxon>
        <taxon>Bacillota</taxon>
        <taxon>Bacilli</taxon>
        <taxon>Bacillales</taxon>
        <taxon>Bacillaceae</taxon>
        <taxon>Bacillus</taxon>
        <taxon>Bacillus cereus group</taxon>
    </lineage>
</organism>
<protein>
    <recommendedName>
        <fullName evidence="1">GTPase Der</fullName>
    </recommendedName>
    <alternativeName>
        <fullName evidence="1">GTP-binding protein EngA</fullName>
    </alternativeName>
</protein>
<keyword id="KW-0342">GTP-binding</keyword>
<keyword id="KW-0547">Nucleotide-binding</keyword>
<keyword id="KW-0677">Repeat</keyword>
<keyword id="KW-0690">Ribosome biogenesis</keyword>
<dbReference type="EMBL" id="CP000764">
    <property type="protein sequence ID" value="ABS21549.1"/>
    <property type="molecule type" value="Genomic_DNA"/>
</dbReference>
<dbReference type="RefSeq" id="WP_011984301.1">
    <property type="nucleotide sequence ID" value="NC_009674.1"/>
</dbReference>
<dbReference type="SMR" id="A7GN41"/>
<dbReference type="STRING" id="315749.Bcer98_1227"/>
<dbReference type="GeneID" id="33896576"/>
<dbReference type="KEGG" id="bcy:Bcer98_1227"/>
<dbReference type="eggNOG" id="COG1160">
    <property type="taxonomic scope" value="Bacteria"/>
</dbReference>
<dbReference type="HOGENOM" id="CLU_016077_6_2_9"/>
<dbReference type="OrthoDB" id="9805918at2"/>
<dbReference type="Proteomes" id="UP000002300">
    <property type="component" value="Chromosome"/>
</dbReference>
<dbReference type="GO" id="GO:0005525">
    <property type="term" value="F:GTP binding"/>
    <property type="evidence" value="ECO:0007669"/>
    <property type="project" value="UniProtKB-UniRule"/>
</dbReference>
<dbReference type="GO" id="GO:0043022">
    <property type="term" value="F:ribosome binding"/>
    <property type="evidence" value="ECO:0007669"/>
    <property type="project" value="TreeGrafter"/>
</dbReference>
<dbReference type="GO" id="GO:0042254">
    <property type="term" value="P:ribosome biogenesis"/>
    <property type="evidence" value="ECO:0007669"/>
    <property type="project" value="UniProtKB-KW"/>
</dbReference>
<dbReference type="CDD" id="cd01894">
    <property type="entry name" value="EngA1"/>
    <property type="match status" value="1"/>
</dbReference>
<dbReference type="CDD" id="cd01895">
    <property type="entry name" value="EngA2"/>
    <property type="match status" value="1"/>
</dbReference>
<dbReference type="FunFam" id="3.30.300.20:FF:000004">
    <property type="entry name" value="GTPase Der"/>
    <property type="match status" value="1"/>
</dbReference>
<dbReference type="FunFam" id="3.40.50.300:FF:000040">
    <property type="entry name" value="GTPase Der"/>
    <property type="match status" value="1"/>
</dbReference>
<dbReference type="FunFam" id="3.40.50.300:FF:000057">
    <property type="entry name" value="GTPase Der"/>
    <property type="match status" value="1"/>
</dbReference>
<dbReference type="Gene3D" id="3.30.300.20">
    <property type="match status" value="1"/>
</dbReference>
<dbReference type="Gene3D" id="3.40.50.300">
    <property type="entry name" value="P-loop containing nucleotide triphosphate hydrolases"/>
    <property type="match status" value="2"/>
</dbReference>
<dbReference type="HAMAP" id="MF_00195">
    <property type="entry name" value="GTPase_Der"/>
    <property type="match status" value="1"/>
</dbReference>
<dbReference type="InterPro" id="IPR031166">
    <property type="entry name" value="G_ENGA"/>
</dbReference>
<dbReference type="InterPro" id="IPR006073">
    <property type="entry name" value="GTP-bd"/>
</dbReference>
<dbReference type="InterPro" id="IPR016484">
    <property type="entry name" value="GTPase_Der"/>
</dbReference>
<dbReference type="InterPro" id="IPR032859">
    <property type="entry name" value="KH_dom-like"/>
</dbReference>
<dbReference type="InterPro" id="IPR015946">
    <property type="entry name" value="KH_dom-like_a/b"/>
</dbReference>
<dbReference type="InterPro" id="IPR027417">
    <property type="entry name" value="P-loop_NTPase"/>
</dbReference>
<dbReference type="InterPro" id="IPR005225">
    <property type="entry name" value="Small_GTP-bd"/>
</dbReference>
<dbReference type="NCBIfam" id="TIGR03594">
    <property type="entry name" value="GTPase_EngA"/>
    <property type="match status" value="1"/>
</dbReference>
<dbReference type="NCBIfam" id="TIGR00231">
    <property type="entry name" value="small_GTP"/>
    <property type="match status" value="2"/>
</dbReference>
<dbReference type="PANTHER" id="PTHR43834">
    <property type="entry name" value="GTPASE DER"/>
    <property type="match status" value="1"/>
</dbReference>
<dbReference type="PANTHER" id="PTHR43834:SF6">
    <property type="entry name" value="GTPASE DER"/>
    <property type="match status" value="1"/>
</dbReference>
<dbReference type="Pfam" id="PF14714">
    <property type="entry name" value="KH_dom-like"/>
    <property type="match status" value="1"/>
</dbReference>
<dbReference type="Pfam" id="PF01926">
    <property type="entry name" value="MMR_HSR1"/>
    <property type="match status" value="2"/>
</dbReference>
<dbReference type="PIRSF" id="PIRSF006485">
    <property type="entry name" value="GTP-binding_EngA"/>
    <property type="match status" value="1"/>
</dbReference>
<dbReference type="PRINTS" id="PR00326">
    <property type="entry name" value="GTP1OBG"/>
</dbReference>
<dbReference type="SUPFAM" id="SSF52540">
    <property type="entry name" value="P-loop containing nucleoside triphosphate hydrolases"/>
    <property type="match status" value="2"/>
</dbReference>
<dbReference type="PROSITE" id="PS51712">
    <property type="entry name" value="G_ENGA"/>
    <property type="match status" value="2"/>
</dbReference>
<gene>
    <name evidence="1" type="primary">der</name>
    <name type="synonym">engA</name>
    <name type="ordered locus">Bcer98_1227</name>
</gene>
<evidence type="ECO:0000255" key="1">
    <source>
        <dbReference type="HAMAP-Rule" id="MF_00195"/>
    </source>
</evidence>
<proteinExistence type="inferred from homology"/>
<reference key="1">
    <citation type="journal article" date="2008" name="Chem. Biol. Interact.">
        <title>Extending the Bacillus cereus group genomics to putative food-borne pathogens of different toxicity.</title>
        <authorList>
            <person name="Lapidus A."/>
            <person name="Goltsman E."/>
            <person name="Auger S."/>
            <person name="Galleron N."/>
            <person name="Segurens B."/>
            <person name="Dossat C."/>
            <person name="Land M.L."/>
            <person name="Broussolle V."/>
            <person name="Brillard J."/>
            <person name="Guinebretiere M.-H."/>
            <person name="Sanchis V."/>
            <person name="Nguen-the C."/>
            <person name="Lereclus D."/>
            <person name="Richardson P."/>
            <person name="Wincker P."/>
            <person name="Weissenbach J."/>
            <person name="Ehrlich S.D."/>
            <person name="Sorokin A."/>
        </authorList>
    </citation>
    <scope>NUCLEOTIDE SEQUENCE [LARGE SCALE GENOMIC DNA]</scope>
    <source>
        <strain>DSM 22905 / CIP 110041 / 391-98 / NVH 391-98</strain>
    </source>
</reference>
<name>DER_BACCN</name>
<accession>A7GN41</accession>
<sequence>MPKPVVAIVGRPNVGKSTIFNRIVGERISIVEDIPGVTRDRIYSAGEWLNHEFNIIDTGGIDIGDEPFLTQIRQQAEVAIDEADVIIFMTNGRDGVTAADEEVAKILYRSNKPVVLAVNKVDNPEMRNEIYDFYALGFGEPFPISGTHGLGLGDLLDEVAQHFPKVEEEEYDDETIRFCLIGRPNVGKSSLVNALLGQERVIVSNVAGTTRDAVDTPYTKDGQDYVIIDTAGMRKKGKVYESTEKYSVLRALRAIERSDVVLVVLDGEEGIIEQDKKIAGYAHDSGRAVVIVVNKWDAVKKDEKTMKAFEDNIRAHFQFLDYAPIVFLSAKTKKRTQTLLPVINQVSESHNIRVQTNVLNDVIMDAVAMNPTPTHNGSRLKIFYATQVAVKPPTFVVFVNDPELMHFSYERFLKNRLRESFGFVGTPIRIIARARD</sequence>
<comment type="function">
    <text evidence="1">GTPase that plays an essential role in the late steps of ribosome biogenesis.</text>
</comment>
<comment type="subunit">
    <text evidence="1">Associates with the 50S ribosomal subunit.</text>
</comment>
<comment type="similarity">
    <text evidence="1">Belongs to the TRAFAC class TrmE-Era-EngA-EngB-Septin-like GTPase superfamily. EngA (Der) GTPase family.</text>
</comment>
<feature type="chain" id="PRO_1000077647" description="GTPase Der">
    <location>
        <begin position="1"/>
        <end position="436"/>
    </location>
</feature>
<feature type="domain" description="EngA-type G 1">
    <location>
        <begin position="4"/>
        <end position="167"/>
    </location>
</feature>
<feature type="domain" description="EngA-type G 2">
    <location>
        <begin position="176"/>
        <end position="351"/>
    </location>
</feature>
<feature type="domain" description="KH-like" evidence="1">
    <location>
        <begin position="352"/>
        <end position="436"/>
    </location>
</feature>
<feature type="binding site" evidence="1">
    <location>
        <begin position="10"/>
        <end position="17"/>
    </location>
    <ligand>
        <name>GTP</name>
        <dbReference type="ChEBI" id="CHEBI:37565"/>
        <label>1</label>
    </ligand>
</feature>
<feature type="binding site" evidence="1">
    <location>
        <begin position="57"/>
        <end position="61"/>
    </location>
    <ligand>
        <name>GTP</name>
        <dbReference type="ChEBI" id="CHEBI:37565"/>
        <label>1</label>
    </ligand>
</feature>
<feature type="binding site" evidence="1">
    <location>
        <begin position="119"/>
        <end position="122"/>
    </location>
    <ligand>
        <name>GTP</name>
        <dbReference type="ChEBI" id="CHEBI:37565"/>
        <label>1</label>
    </ligand>
</feature>
<feature type="binding site" evidence="1">
    <location>
        <begin position="182"/>
        <end position="189"/>
    </location>
    <ligand>
        <name>GTP</name>
        <dbReference type="ChEBI" id="CHEBI:37565"/>
        <label>2</label>
    </ligand>
</feature>
<feature type="binding site" evidence="1">
    <location>
        <begin position="229"/>
        <end position="233"/>
    </location>
    <ligand>
        <name>GTP</name>
        <dbReference type="ChEBI" id="CHEBI:37565"/>
        <label>2</label>
    </ligand>
</feature>
<feature type="binding site" evidence="1">
    <location>
        <begin position="294"/>
        <end position="297"/>
    </location>
    <ligand>
        <name>GTP</name>
        <dbReference type="ChEBI" id="CHEBI:37565"/>
        <label>2</label>
    </ligand>
</feature>